<gene>
    <name type="primary">RTN1</name>
</gene>
<reference key="1">
    <citation type="journal article" date="2004" name="Cell">
        <title>Accelerated evolution of nervous system genes in the origin of Homo sapiens.</title>
        <authorList>
            <person name="Dorus S."/>
            <person name="Vallender E.J."/>
            <person name="Evans P.D."/>
            <person name="Anderson J.R."/>
            <person name="Gilbert S.L."/>
            <person name="Mahowald M."/>
            <person name="Wyckoff G.J."/>
            <person name="Malcom C.M."/>
            <person name="Lahn B.T."/>
        </authorList>
    </citation>
    <scope>NUCLEOTIDE SEQUENCE [MRNA]</scope>
</reference>
<sequence>MAAPGDPQDELLPLAGPGSQWLRDRGEGEDEAVTPKGATPAPQAGEPSPGLGARAREAASREAGSGPARQSPVAMETASTGVAGVSSAMDHTFSTTSKDGEGSCYTSLISDICYPPQEDSTYFTGILQRENGHVTISESPEELGTPGSSLPDVPGIESRGLFSSDSGIEMTPAESTEVNKILADPLDQMKAEAYKYIDITRPEEVKHQEQNHPELEDKDLDFKNKDTDISIKPEGVREPDEPAPVEGKIIKDHLLEESTFAPYIDDLSEEQRRAPQITTPVKITLTEIEPSVETTTQEKTPEKQDICLKPSPDTVPTVTVSEPEDDSPGSITPPSSGTEPSAAESQGKGSISEDELITAIKEAKGLSYETAESPRPVGQLADRPEVKARSGPPTIPSPLDHEASSAESGDSEIELVSEDPMAAEDALPSGYVSFGHVGGPPPSPASPSIQYSILREEREAELDSELIIESCDASSASEESPKREQDSPPMKPGALDAIREETGVRAEERAPSRRGLAEPASFLDYPSTEPQPGPELPPGDGALEPETPTLPRKPEEDASSHQSPAATKGPGPLGPGAPPPLLFLNKQKAIDLLYWRDIKQTGIVFGSFLLLLFSLTQFSVVSVVAYLALAALSATISFRIYKSVLQAVQKTDEGHPFKAYLELEITLSQEQIQKYTDCLQFYVNSTLKELRRLFLVQDLVDSLKFAVLMWLLTYVGALFNGLTLLLMAVVSMFTLPVVYVKHQAQIDQYLGLVRTHINAVVAKIQAKIPGAKRHAE</sequence>
<evidence type="ECO:0000250" key="1"/>
<evidence type="ECO:0000250" key="2">
    <source>
        <dbReference type="UniProtKB" id="Q16799"/>
    </source>
</evidence>
<evidence type="ECO:0000250" key="3">
    <source>
        <dbReference type="UniProtKB" id="Q64548"/>
    </source>
</evidence>
<evidence type="ECO:0000250" key="4">
    <source>
        <dbReference type="UniProtKB" id="Q8K0T0"/>
    </source>
</evidence>
<evidence type="ECO:0000255" key="5"/>
<evidence type="ECO:0000255" key="6">
    <source>
        <dbReference type="PROSITE-ProRule" id="PRU00170"/>
    </source>
</evidence>
<evidence type="ECO:0000256" key="7">
    <source>
        <dbReference type="SAM" id="MobiDB-lite"/>
    </source>
</evidence>
<accession>Q5IS59</accession>
<name>RTN1_PANTR</name>
<feature type="chain" id="PRO_0000168160" description="Reticulon-1">
    <location>
        <begin position="1"/>
        <end position="776"/>
    </location>
</feature>
<feature type="transmembrane region" description="Helical" evidence="5">
    <location>
        <begin position="603"/>
        <end position="623"/>
    </location>
</feature>
<feature type="transmembrane region" description="Helical" evidence="5">
    <location>
        <begin position="705"/>
        <end position="725"/>
    </location>
</feature>
<feature type="domain" description="Reticulon" evidence="6">
    <location>
        <begin position="589"/>
        <end position="776"/>
    </location>
</feature>
<feature type="region of interest" description="Disordered" evidence="7">
    <location>
        <begin position="1"/>
        <end position="103"/>
    </location>
</feature>
<feature type="region of interest" description="Disordered" evidence="7">
    <location>
        <begin position="136"/>
        <end position="168"/>
    </location>
</feature>
<feature type="region of interest" description="Disordered" evidence="7">
    <location>
        <begin position="204"/>
        <end position="244"/>
    </location>
</feature>
<feature type="region of interest" description="Disordered" evidence="7">
    <location>
        <begin position="285"/>
        <end position="580"/>
    </location>
</feature>
<feature type="compositionally biased region" description="Basic and acidic residues" evidence="7">
    <location>
        <begin position="204"/>
        <end position="240"/>
    </location>
</feature>
<feature type="compositionally biased region" description="Low complexity" evidence="7">
    <location>
        <begin position="328"/>
        <end position="341"/>
    </location>
</feature>
<feature type="compositionally biased region" description="Basic and acidic residues" evidence="7">
    <location>
        <begin position="497"/>
        <end position="511"/>
    </location>
</feature>
<feature type="modified residue" description="Phosphoserine" evidence="3">
    <location>
        <position position="327"/>
    </location>
</feature>
<feature type="modified residue" description="Phosphoserine" evidence="4">
    <location>
        <position position="350"/>
    </location>
</feature>
<feature type="modified residue" description="Phosphoserine" evidence="4">
    <location>
        <position position="352"/>
    </location>
</feature>
<feature type="modified residue" description="Phosphoserine" evidence="2">
    <location>
        <position position="487"/>
    </location>
</feature>
<comment type="function">
    <text evidence="2">Inhibits amyloid precursor protein processing, probably by blocking BACE1 activity.</text>
</comment>
<comment type="subunit">
    <text evidence="2">Interacts with NDRG1. Interacts with BACE1. Interacts with TMEM33.</text>
</comment>
<comment type="subcellular location">
    <subcellularLocation>
        <location evidence="2">Endoplasmic reticulum membrane</location>
        <topology evidence="5">Multi-pass membrane protein</topology>
    </subcellularLocation>
    <subcellularLocation>
        <location evidence="2">Golgi apparatus membrane</location>
        <topology evidence="5">Multi-pass membrane protein</topology>
    </subcellularLocation>
</comment>
<comment type="PTM">
    <text evidence="1">Phosphorylated.</text>
</comment>
<organism>
    <name type="scientific">Pan troglodytes</name>
    <name type="common">Chimpanzee</name>
    <dbReference type="NCBI Taxonomy" id="9598"/>
    <lineage>
        <taxon>Eukaryota</taxon>
        <taxon>Metazoa</taxon>
        <taxon>Chordata</taxon>
        <taxon>Craniata</taxon>
        <taxon>Vertebrata</taxon>
        <taxon>Euteleostomi</taxon>
        <taxon>Mammalia</taxon>
        <taxon>Eutheria</taxon>
        <taxon>Euarchontoglires</taxon>
        <taxon>Primates</taxon>
        <taxon>Haplorrhini</taxon>
        <taxon>Catarrhini</taxon>
        <taxon>Hominidae</taxon>
        <taxon>Pan</taxon>
    </lineage>
</organism>
<protein>
    <recommendedName>
        <fullName>Reticulon-1</fullName>
    </recommendedName>
</protein>
<proteinExistence type="evidence at transcript level"/>
<keyword id="KW-0256">Endoplasmic reticulum</keyword>
<keyword id="KW-0333">Golgi apparatus</keyword>
<keyword id="KW-0472">Membrane</keyword>
<keyword id="KW-0597">Phosphoprotein</keyword>
<keyword id="KW-1185">Reference proteome</keyword>
<keyword id="KW-0812">Transmembrane</keyword>
<keyword id="KW-1133">Transmembrane helix</keyword>
<dbReference type="EMBL" id="AY665269">
    <property type="protein sequence ID" value="AAV74307.1"/>
    <property type="molecule type" value="mRNA"/>
</dbReference>
<dbReference type="RefSeq" id="NP_001029293.1">
    <property type="nucleotide sequence ID" value="NM_001034121.1"/>
</dbReference>
<dbReference type="SMR" id="Q5IS59"/>
<dbReference type="FunCoup" id="Q5IS59">
    <property type="interactions" value="404"/>
</dbReference>
<dbReference type="STRING" id="9598.ENSPTRP00000044929"/>
<dbReference type="PaxDb" id="9598-ENSPTRP00000056915"/>
<dbReference type="GeneID" id="452945"/>
<dbReference type="KEGG" id="ptr:452945"/>
<dbReference type="CTD" id="6252"/>
<dbReference type="eggNOG" id="KOG1792">
    <property type="taxonomic scope" value="Eukaryota"/>
</dbReference>
<dbReference type="InParanoid" id="Q5IS59"/>
<dbReference type="OrthoDB" id="13059at9604"/>
<dbReference type="Proteomes" id="UP000002277">
    <property type="component" value="Unplaced"/>
</dbReference>
<dbReference type="GO" id="GO:0005789">
    <property type="term" value="C:endoplasmic reticulum membrane"/>
    <property type="evidence" value="ECO:0000318"/>
    <property type="project" value="GO_Central"/>
</dbReference>
<dbReference type="GO" id="GO:0000139">
    <property type="term" value="C:Golgi membrane"/>
    <property type="evidence" value="ECO:0007669"/>
    <property type="project" value="UniProtKB-SubCell"/>
</dbReference>
<dbReference type="GO" id="GO:0043005">
    <property type="term" value="C:neuron projection"/>
    <property type="evidence" value="ECO:0000318"/>
    <property type="project" value="GO_Central"/>
</dbReference>
<dbReference type="GO" id="GO:0014069">
    <property type="term" value="C:postsynaptic density"/>
    <property type="evidence" value="ECO:0000318"/>
    <property type="project" value="GO_Central"/>
</dbReference>
<dbReference type="GO" id="GO:0007420">
    <property type="term" value="P:brain development"/>
    <property type="evidence" value="ECO:0000318"/>
    <property type="project" value="GO_Central"/>
</dbReference>
<dbReference type="GO" id="GO:0071787">
    <property type="term" value="P:endoplasmic reticulum tubular network formation"/>
    <property type="evidence" value="ECO:0000318"/>
    <property type="project" value="GO_Central"/>
</dbReference>
<dbReference type="GO" id="GO:1902430">
    <property type="term" value="P:negative regulation of amyloid-beta formation"/>
    <property type="evidence" value="ECO:0000250"/>
    <property type="project" value="UniProtKB"/>
</dbReference>
<dbReference type="GO" id="GO:0030182">
    <property type="term" value="P:neuron differentiation"/>
    <property type="evidence" value="ECO:0000318"/>
    <property type="project" value="GO_Central"/>
</dbReference>
<dbReference type="FunFam" id="1.20.5.2480:FF:000001">
    <property type="entry name" value="Reticulon"/>
    <property type="match status" value="1"/>
</dbReference>
<dbReference type="Gene3D" id="1.20.5.2480">
    <property type="match status" value="1"/>
</dbReference>
<dbReference type="InterPro" id="IPR003388">
    <property type="entry name" value="Reticulon"/>
</dbReference>
<dbReference type="InterPro" id="IPR046964">
    <property type="entry name" value="RTN1-4"/>
</dbReference>
<dbReference type="PANTHER" id="PTHR45799:SF5">
    <property type="entry name" value="RETICULON-1"/>
    <property type="match status" value="1"/>
</dbReference>
<dbReference type="PANTHER" id="PTHR45799">
    <property type="entry name" value="RETICULON-LIKE PROTEIN"/>
    <property type="match status" value="1"/>
</dbReference>
<dbReference type="Pfam" id="PF02453">
    <property type="entry name" value="Reticulon"/>
    <property type="match status" value="1"/>
</dbReference>
<dbReference type="PROSITE" id="PS50845">
    <property type="entry name" value="RETICULON"/>
    <property type="match status" value="1"/>
</dbReference>